<organism>
    <name type="scientific">Shewanella sp. (strain ANA-3)</name>
    <dbReference type="NCBI Taxonomy" id="94122"/>
    <lineage>
        <taxon>Bacteria</taxon>
        <taxon>Pseudomonadati</taxon>
        <taxon>Pseudomonadota</taxon>
        <taxon>Gammaproteobacteria</taxon>
        <taxon>Alteromonadales</taxon>
        <taxon>Shewanellaceae</taxon>
        <taxon>Shewanella</taxon>
    </lineage>
</organism>
<gene>
    <name type="ordered locus">Shewana3_1200</name>
</gene>
<comment type="similarity">
    <text evidence="1">Belongs to the UPF0301 (AlgH) family.</text>
</comment>
<reference key="1">
    <citation type="submission" date="2006-09" db="EMBL/GenBank/DDBJ databases">
        <title>Complete sequence of chromosome 1 of Shewanella sp. ANA-3.</title>
        <authorList>
            <person name="Copeland A."/>
            <person name="Lucas S."/>
            <person name="Lapidus A."/>
            <person name="Barry K."/>
            <person name="Detter J.C."/>
            <person name="Glavina del Rio T."/>
            <person name="Hammon N."/>
            <person name="Israni S."/>
            <person name="Dalin E."/>
            <person name="Tice H."/>
            <person name="Pitluck S."/>
            <person name="Chertkov O."/>
            <person name="Brettin T."/>
            <person name="Bruce D."/>
            <person name="Han C."/>
            <person name="Tapia R."/>
            <person name="Gilna P."/>
            <person name="Schmutz J."/>
            <person name="Larimer F."/>
            <person name="Land M."/>
            <person name="Hauser L."/>
            <person name="Kyrpides N."/>
            <person name="Kim E."/>
            <person name="Newman D."/>
            <person name="Salticov C."/>
            <person name="Konstantinidis K."/>
            <person name="Klappenback J."/>
            <person name="Tiedje J."/>
            <person name="Richardson P."/>
        </authorList>
    </citation>
    <scope>NUCLEOTIDE SEQUENCE [LARGE SCALE GENOMIC DNA]</scope>
    <source>
        <strain>ANA-3</strain>
    </source>
</reference>
<dbReference type="EMBL" id="CP000469">
    <property type="protein sequence ID" value="ABK47435.1"/>
    <property type="molecule type" value="Genomic_DNA"/>
</dbReference>
<dbReference type="RefSeq" id="WP_011621987.1">
    <property type="nucleotide sequence ID" value="NC_008577.1"/>
</dbReference>
<dbReference type="SMR" id="A0KUG6"/>
<dbReference type="STRING" id="94122.Shewana3_1200"/>
<dbReference type="KEGG" id="shn:Shewana3_1200"/>
<dbReference type="eggNOG" id="COG1678">
    <property type="taxonomic scope" value="Bacteria"/>
</dbReference>
<dbReference type="HOGENOM" id="CLU_057596_1_0_6"/>
<dbReference type="OrthoDB" id="9807486at2"/>
<dbReference type="Proteomes" id="UP000002589">
    <property type="component" value="Chromosome"/>
</dbReference>
<dbReference type="GO" id="GO:0005829">
    <property type="term" value="C:cytosol"/>
    <property type="evidence" value="ECO:0007669"/>
    <property type="project" value="TreeGrafter"/>
</dbReference>
<dbReference type="Gene3D" id="3.40.1740.10">
    <property type="entry name" value="VC0467-like"/>
    <property type="match status" value="1"/>
</dbReference>
<dbReference type="Gene3D" id="3.30.70.1300">
    <property type="entry name" value="VC0467-like domains"/>
    <property type="match status" value="1"/>
</dbReference>
<dbReference type="HAMAP" id="MF_00758">
    <property type="entry name" value="UPF0301"/>
    <property type="match status" value="1"/>
</dbReference>
<dbReference type="InterPro" id="IPR003774">
    <property type="entry name" value="AlgH-like"/>
</dbReference>
<dbReference type="NCBIfam" id="NF001266">
    <property type="entry name" value="PRK00228.1-1"/>
    <property type="match status" value="1"/>
</dbReference>
<dbReference type="PANTHER" id="PTHR30327">
    <property type="entry name" value="UNCHARACTERIZED PROTEIN YQGE"/>
    <property type="match status" value="1"/>
</dbReference>
<dbReference type="PANTHER" id="PTHR30327:SF1">
    <property type="entry name" value="UPF0301 PROTEIN YQGE"/>
    <property type="match status" value="1"/>
</dbReference>
<dbReference type="Pfam" id="PF02622">
    <property type="entry name" value="DUF179"/>
    <property type="match status" value="1"/>
</dbReference>
<dbReference type="SUPFAM" id="SSF143456">
    <property type="entry name" value="VC0467-like"/>
    <property type="match status" value="1"/>
</dbReference>
<feature type="chain" id="PRO_1000046683" description="UPF0301 protein Shewana3_1200">
    <location>
        <begin position="1"/>
        <end position="187"/>
    </location>
</feature>
<proteinExistence type="inferred from homology"/>
<protein>
    <recommendedName>
        <fullName evidence="1">UPF0301 protein Shewana3_1200</fullName>
    </recommendedName>
</protein>
<accession>A0KUG6</accession>
<evidence type="ECO:0000255" key="1">
    <source>
        <dbReference type="HAMAP-Rule" id="MF_00758"/>
    </source>
</evidence>
<sequence length="187" mass="20665">MESLQNHFLIAMPSLDDTFFERTVIYLCEHDEKGAMGLVINKPLGIEVNSLLEQMDLPAEQVSTDLALGAQVLMGGPVSQDRGFVLHTSQPYWANSTELSSGLMLTTSRDVLTAIGSERSPEKFIVALGYAGWSKNQLEQELADNSWLTIPADQALLFDVKHEDRWQQASRALGFDAWQLSSQAGHA</sequence>
<name>Y1200_SHESA</name>